<keyword id="KW-0012">Acyltransferase</keyword>
<keyword id="KW-1185">Reference proteome</keyword>
<keyword id="KW-0808">Transferase</keyword>
<reference key="1">
    <citation type="journal article" date="1999" name="Nature">
        <title>Sequence and analysis of chromosome 4 of the plant Arabidopsis thaliana.</title>
        <authorList>
            <person name="Mayer K.F.X."/>
            <person name="Schueller C."/>
            <person name="Wambutt R."/>
            <person name="Murphy G."/>
            <person name="Volckaert G."/>
            <person name="Pohl T."/>
            <person name="Duesterhoeft A."/>
            <person name="Stiekema W."/>
            <person name="Entian K.-D."/>
            <person name="Terryn N."/>
            <person name="Harris B."/>
            <person name="Ansorge W."/>
            <person name="Brandt P."/>
            <person name="Grivell L.A."/>
            <person name="Rieger M."/>
            <person name="Weichselgartner M."/>
            <person name="de Simone V."/>
            <person name="Obermaier B."/>
            <person name="Mache R."/>
            <person name="Mueller M."/>
            <person name="Kreis M."/>
            <person name="Delseny M."/>
            <person name="Puigdomenech P."/>
            <person name="Watson M."/>
            <person name="Schmidtheini T."/>
            <person name="Reichert B."/>
            <person name="Portetelle D."/>
            <person name="Perez-Alonso M."/>
            <person name="Boutry M."/>
            <person name="Bancroft I."/>
            <person name="Vos P."/>
            <person name="Hoheisel J."/>
            <person name="Zimmermann W."/>
            <person name="Wedler H."/>
            <person name="Ridley P."/>
            <person name="Langham S.-A."/>
            <person name="McCullagh B."/>
            <person name="Bilham L."/>
            <person name="Robben J."/>
            <person name="van der Schueren J."/>
            <person name="Grymonprez B."/>
            <person name="Chuang Y.-J."/>
            <person name="Vandenbussche F."/>
            <person name="Braeken M."/>
            <person name="Weltjens I."/>
            <person name="Voet M."/>
            <person name="Bastiaens I."/>
            <person name="Aert R."/>
            <person name="Defoor E."/>
            <person name="Weitzenegger T."/>
            <person name="Bothe G."/>
            <person name="Ramsperger U."/>
            <person name="Hilbert H."/>
            <person name="Braun M."/>
            <person name="Holzer E."/>
            <person name="Brandt A."/>
            <person name="Peters S."/>
            <person name="van Staveren M."/>
            <person name="Dirkse W."/>
            <person name="Mooijman P."/>
            <person name="Klein Lankhorst R."/>
            <person name="Rose M."/>
            <person name="Hauf J."/>
            <person name="Koetter P."/>
            <person name="Berneiser S."/>
            <person name="Hempel S."/>
            <person name="Feldpausch M."/>
            <person name="Lamberth S."/>
            <person name="Van den Daele H."/>
            <person name="De Keyser A."/>
            <person name="Buysshaert C."/>
            <person name="Gielen J."/>
            <person name="Villarroel R."/>
            <person name="De Clercq R."/>
            <person name="van Montagu M."/>
            <person name="Rogers J."/>
            <person name="Cronin A."/>
            <person name="Quail M.A."/>
            <person name="Bray-Allen S."/>
            <person name="Clark L."/>
            <person name="Doggett J."/>
            <person name="Hall S."/>
            <person name="Kay M."/>
            <person name="Lennard N."/>
            <person name="McLay K."/>
            <person name="Mayes R."/>
            <person name="Pettett A."/>
            <person name="Rajandream M.A."/>
            <person name="Lyne M."/>
            <person name="Benes V."/>
            <person name="Rechmann S."/>
            <person name="Borkova D."/>
            <person name="Bloecker H."/>
            <person name="Scharfe M."/>
            <person name="Grimm M."/>
            <person name="Loehnert T.-H."/>
            <person name="Dose S."/>
            <person name="de Haan M."/>
            <person name="Maarse A.C."/>
            <person name="Schaefer M."/>
            <person name="Mueller-Auer S."/>
            <person name="Gabel C."/>
            <person name="Fuchs M."/>
            <person name="Fartmann B."/>
            <person name="Granderath K."/>
            <person name="Dauner D."/>
            <person name="Herzl A."/>
            <person name="Neumann S."/>
            <person name="Argiriou A."/>
            <person name="Vitale D."/>
            <person name="Liguori R."/>
            <person name="Piravandi E."/>
            <person name="Massenet O."/>
            <person name="Quigley F."/>
            <person name="Clabauld G."/>
            <person name="Muendlein A."/>
            <person name="Felber R."/>
            <person name="Schnabl S."/>
            <person name="Hiller R."/>
            <person name="Schmidt W."/>
            <person name="Lecharny A."/>
            <person name="Aubourg S."/>
            <person name="Chefdor F."/>
            <person name="Cooke R."/>
            <person name="Berger C."/>
            <person name="Monfort A."/>
            <person name="Casacuberta E."/>
            <person name="Gibbons T."/>
            <person name="Weber N."/>
            <person name="Vandenbol M."/>
            <person name="Bargues M."/>
            <person name="Terol J."/>
            <person name="Torres A."/>
            <person name="Perez-Perez A."/>
            <person name="Purnelle B."/>
            <person name="Bent E."/>
            <person name="Johnson S."/>
            <person name="Tacon D."/>
            <person name="Jesse T."/>
            <person name="Heijnen L."/>
            <person name="Schwarz S."/>
            <person name="Scholler P."/>
            <person name="Heber S."/>
            <person name="Francs P."/>
            <person name="Bielke C."/>
            <person name="Frishman D."/>
            <person name="Haase D."/>
            <person name="Lemcke K."/>
            <person name="Mewes H.-W."/>
            <person name="Stocker S."/>
            <person name="Zaccaria P."/>
            <person name="Bevan M."/>
            <person name="Wilson R.K."/>
            <person name="de la Bastide M."/>
            <person name="Habermann K."/>
            <person name="Parnell L."/>
            <person name="Dedhia N."/>
            <person name="Gnoj L."/>
            <person name="Schutz K."/>
            <person name="Huang E."/>
            <person name="Spiegel L."/>
            <person name="Sekhon M."/>
            <person name="Murray J."/>
            <person name="Sheet P."/>
            <person name="Cordes M."/>
            <person name="Abu-Threideh J."/>
            <person name="Stoneking T."/>
            <person name="Kalicki J."/>
            <person name="Graves T."/>
            <person name="Harmon G."/>
            <person name="Edwards J."/>
            <person name="Latreille P."/>
            <person name="Courtney L."/>
            <person name="Cloud J."/>
            <person name="Abbott A."/>
            <person name="Scott K."/>
            <person name="Johnson D."/>
            <person name="Minx P."/>
            <person name="Bentley D."/>
            <person name="Fulton B."/>
            <person name="Miller N."/>
            <person name="Greco T."/>
            <person name="Kemp K."/>
            <person name="Kramer J."/>
            <person name="Fulton L."/>
            <person name="Mardis E."/>
            <person name="Dante M."/>
            <person name="Pepin K."/>
            <person name="Hillier L.W."/>
            <person name="Nelson J."/>
            <person name="Spieth J."/>
            <person name="Ryan E."/>
            <person name="Andrews S."/>
            <person name="Geisel C."/>
            <person name="Layman D."/>
            <person name="Du H."/>
            <person name="Ali J."/>
            <person name="Berghoff A."/>
            <person name="Jones K."/>
            <person name="Drone K."/>
            <person name="Cotton M."/>
            <person name="Joshu C."/>
            <person name="Antonoiu B."/>
            <person name="Zidanic M."/>
            <person name="Strong C."/>
            <person name="Sun H."/>
            <person name="Lamar B."/>
            <person name="Yordan C."/>
            <person name="Ma P."/>
            <person name="Zhong J."/>
            <person name="Preston R."/>
            <person name="Vil D."/>
            <person name="Shekher M."/>
            <person name="Matero A."/>
            <person name="Shah R."/>
            <person name="Swaby I.K."/>
            <person name="O'Shaughnessy A."/>
            <person name="Rodriguez M."/>
            <person name="Hoffman J."/>
            <person name="Till S."/>
            <person name="Granat S."/>
            <person name="Shohdy N."/>
            <person name="Hasegawa A."/>
            <person name="Hameed A."/>
            <person name="Lodhi M."/>
            <person name="Johnson A."/>
            <person name="Chen E."/>
            <person name="Marra M.A."/>
            <person name="Martienssen R."/>
            <person name="McCombie W.R."/>
        </authorList>
    </citation>
    <scope>NUCLEOTIDE SEQUENCE [LARGE SCALE GENOMIC DNA]</scope>
    <source>
        <strain>cv. Columbia</strain>
    </source>
</reference>
<reference key="2">
    <citation type="journal article" date="2017" name="Plant J.">
        <title>Araport11: a complete reannotation of the Arabidopsis thaliana reference genome.</title>
        <authorList>
            <person name="Cheng C.Y."/>
            <person name="Krishnakumar V."/>
            <person name="Chan A.P."/>
            <person name="Thibaud-Nissen F."/>
            <person name="Schobel S."/>
            <person name="Town C.D."/>
        </authorList>
    </citation>
    <scope>GENOME REANNOTATION</scope>
    <source>
        <strain>cv. Columbia</strain>
    </source>
</reference>
<reference key="3">
    <citation type="submission" date="2007-01" db="EMBL/GenBank/DDBJ databases">
        <title>Arabidopsis ORF clones.</title>
        <authorList>
            <person name="Bautista V.R."/>
            <person name="Kim C.J."/>
            <person name="Chen H."/>
            <person name="Wu S.Y."/>
            <person name="De Los Reyes C."/>
            <person name="Ecker J.R."/>
        </authorList>
    </citation>
    <scope>NUCLEOTIDE SEQUENCE [LARGE SCALE MRNA]</scope>
</reference>
<reference key="4">
    <citation type="journal article" date="2008" name="Proteins">
        <title>Solution structure of At3g28950 from Arabidopsis thaliana.</title>
        <authorList>
            <person name="de la Cruz N.B."/>
            <person name="Peterson F.C."/>
            <person name="Volkman B.F."/>
        </authorList>
    </citation>
    <scope>GENE FAMILY</scope>
</reference>
<reference key="5">
    <citation type="journal article" date="2009" name="J. Proteomics">
        <title>Phosphoproteomic analysis of nuclei-enriched fractions from Arabidopsis thaliana.</title>
        <authorList>
            <person name="Jones A.M.E."/>
            <person name="MacLean D."/>
            <person name="Studholme D.J."/>
            <person name="Serna-Sanz A."/>
            <person name="Andreasson E."/>
            <person name="Rathjen J.P."/>
            <person name="Peck S.C."/>
        </authorList>
    </citation>
    <scope>IDENTIFICATION BY MASS SPECTROMETRY [LARGE SCALE ANALYSIS]</scope>
    <source>
        <strain>cv. Columbia</strain>
    </source>
</reference>
<protein>
    <recommendedName>
        <fullName evidence="2">AIG2-like protein C</fullName>
        <ecNumber evidence="2">2.3.2.-</ecNumber>
    </recommendedName>
    <alternativeName>
        <fullName evidence="2">Avirulence-induced gene 2-like protein C</fullName>
    </alternativeName>
    <alternativeName>
        <fullName evidence="1">Putative gamma-glutamylcyclotransferase</fullName>
    </alternativeName>
</protein>
<comment type="function">
    <text evidence="1">Putative gamma-glutamylcyclotransferase.</text>
</comment>
<comment type="tissue specificity">
    <text evidence="3">Expressed in flowers, leaves, stems and roots.</text>
</comment>
<comment type="developmental stage">
    <text evidence="3">Expressed constitutively during the life cycle.</text>
</comment>
<comment type="induction">
    <text evidence="3">Down-regulated by biological stimuli.</text>
</comment>
<comment type="similarity">
    <text evidence="2">Belongs to the gamma-glutamylcyclotransferase family.</text>
</comment>
<comment type="sequence caution" evidence="2">
    <conflict type="erroneous gene model prediction">
        <sequence resource="EMBL-CDS" id="CAA16534"/>
    </conflict>
</comment>
<comment type="sequence caution" evidence="2">
    <conflict type="erroneous gene model prediction">
        <sequence resource="EMBL-CDS" id="CAB79849"/>
    </conflict>
</comment>
<evidence type="ECO:0000250" key="1">
    <source>
        <dbReference type="UniProtKB" id="O75223"/>
    </source>
</evidence>
<evidence type="ECO:0000305" key="2"/>
<evidence type="ECO:0000305" key="3">
    <source>
    </source>
</evidence>
<evidence type="ECO:0000312" key="4">
    <source>
        <dbReference type="Araport" id="AT4G31310"/>
    </source>
</evidence>
<evidence type="ECO:0000312" key="5">
    <source>
        <dbReference type="EMBL" id="ABN04803.1"/>
    </source>
</evidence>
<feature type="chain" id="PRO_0000438023" description="AIG2-like protein C">
    <location>
        <begin position="1"/>
        <end position="172"/>
    </location>
</feature>
<feature type="active site" description="Proton acceptor" evidence="1">
    <location>
        <position position="81"/>
    </location>
</feature>
<feature type="binding site" evidence="1">
    <location>
        <begin position="13"/>
        <end position="18"/>
    </location>
    <ligand>
        <name>substrate</name>
    </ligand>
</feature>
<dbReference type="EC" id="2.3.2.-" evidence="2"/>
<dbReference type="EMBL" id="AL021633">
    <property type="protein sequence ID" value="CAA16534.1"/>
    <property type="status" value="ALT_SEQ"/>
    <property type="molecule type" value="Genomic_DNA"/>
</dbReference>
<dbReference type="EMBL" id="AL161578">
    <property type="protein sequence ID" value="CAB79849.1"/>
    <property type="status" value="ALT_SEQ"/>
    <property type="molecule type" value="Genomic_DNA"/>
</dbReference>
<dbReference type="EMBL" id="CP002687">
    <property type="protein sequence ID" value="AEE85890.1"/>
    <property type="molecule type" value="Genomic_DNA"/>
</dbReference>
<dbReference type="EMBL" id="BT030065">
    <property type="protein sequence ID" value="ABN04803.1"/>
    <property type="molecule type" value="mRNA"/>
</dbReference>
<dbReference type="PIR" id="T04498">
    <property type="entry name" value="T04498"/>
</dbReference>
<dbReference type="RefSeq" id="NP_194859.2">
    <property type="nucleotide sequence ID" value="NM_119280.2"/>
</dbReference>
<dbReference type="SMR" id="A2RVS4"/>
<dbReference type="FunCoup" id="A2RVS4">
    <property type="interactions" value="12"/>
</dbReference>
<dbReference type="MetOSite" id="A2RVS4"/>
<dbReference type="PaxDb" id="3702-AT4G31310.1"/>
<dbReference type="ProteomicsDB" id="244805"/>
<dbReference type="EnsemblPlants" id="AT4G31310.1">
    <property type="protein sequence ID" value="AT4G31310.1"/>
    <property type="gene ID" value="AT4G31310"/>
</dbReference>
<dbReference type="GeneID" id="829258"/>
<dbReference type="Gramene" id="AT4G31310.1">
    <property type="protein sequence ID" value="AT4G31310.1"/>
    <property type="gene ID" value="AT4G31310"/>
</dbReference>
<dbReference type="KEGG" id="ath:AT4G31310"/>
<dbReference type="Araport" id="AT4G31310"/>
<dbReference type="TAIR" id="AT4G31310"/>
<dbReference type="eggNOG" id="ENOG502RXRF">
    <property type="taxonomic scope" value="Eukaryota"/>
</dbReference>
<dbReference type="HOGENOM" id="CLU_093936_0_1_1"/>
<dbReference type="InParanoid" id="A2RVS4"/>
<dbReference type="OMA" id="FEEWKRH"/>
<dbReference type="OrthoDB" id="1044435at2759"/>
<dbReference type="PhylomeDB" id="A2RVS4"/>
<dbReference type="PRO" id="PR:A2RVS4"/>
<dbReference type="Proteomes" id="UP000006548">
    <property type="component" value="Chromosome 4"/>
</dbReference>
<dbReference type="ExpressionAtlas" id="A2RVS4">
    <property type="expression patterns" value="baseline and differential"/>
</dbReference>
<dbReference type="GO" id="GO:0016746">
    <property type="term" value="F:acyltransferase activity"/>
    <property type="evidence" value="ECO:0007669"/>
    <property type="project" value="UniProtKB-KW"/>
</dbReference>
<dbReference type="CDD" id="cd06661">
    <property type="entry name" value="GGCT_like"/>
    <property type="match status" value="1"/>
</dbReference>
<dbReference type="FunFam" id="3.10.490.10:FF:000022">
    <property type="entry name" value="Protein AIG2 B"/>
    <property type="match status" value="1"/>
</dbReference>
<dbReference type="Gene3D" id="6.10.250.210">
    <property type="match status" value="1"/>
</dbReference>
<dbReference type="Gene3D" id="3.10.490.10">
    <property type="entry name" value="Gamma-glutamyl cyclotransferase-like"/>
    <property type="match status" value="1"/>
</dbReference>
<dbReference type="InterPro" id="IPR045038">
    <property type="entry name" value="AIG2-like"/>
</dbReference>
<dbReference type="InterPro" id="IPR009288">
    <property type="entry name" value="AIG2-like_dom"/>
</dbReference>
<dbReference type="InterPro" id="IPR013024">
    <property type="entry name" value="GGCT-like"/>
</dbReference>
<dbReference type="InterPro" id="IPR036568">
    <property type="entry name" value="GGCT-like_sf"/>
</dbReference>
<dbReference type="PANTHER" id="PTHR31544:SF9">
    <property type="entry name" value="AIG2-LIKE PROTEIN C"/>
    <property type="match status" value="1"/>
</dbReference>
<dbReference type="PANTHER" id="PTHR31544">
    <property type="entry name" value="AIG2-LIKE PROTEIN D"/>
    <property type="match status" value="1"/>
</dbReference>
<dbReference type="Pfam" id="PF06094">
    <property type="entry name" value="GGACT"/>
    <property type="match status" value="1"/>
</dbReference>
<dbReference type="SUPFAM" id="SSF110857">
    <property type="entry name" value="Gamma-glutamyl cyclotransferase-like"/>
    <property type="match status" value="1"/>
</dbReference>
<name>AIGLC_ARATH</name>
<accession>A2RVS4</accession>
<accession>O49580</accession>
<gene>
    <name evidence="2" type="primary">AIG2LC</name>
    <name evidence="4" type="ordered locus">At4g31310</name>
    <name type="ORF">F8F16.130</name>
</gene>
<organism evidence="5">
    <name type="scientific">Arabidopsis thaliana</name>
    <name type="common">Mouse-ear cress</name>
    <dbReference type="NCBI Taxonomy" id="3702"/>
    <lineage>
        <taxon>Eukaryota</taxon>
        <taxon>Viridiplantae</taxon>
        <taxon>Streptophyta</taxon>
        <taxon>Embryophyta</taxon>
        <taxon>Tracheophyta</taxon>
        <taxon>Spermatophyta</taxon>
        <taxon>Magnoliopsida</taxon>
        <taxon>eudicotyledons</taxon>
        <taxon>Gunneridae</taxon>
        <taxon>Pentapetalae</taxon>
        <taxon>rosids</taxon>
        <taxon>malvids</taxon>
        <taxon>Brassicales</taxon>
        <taxon>Brassicaceae</taxon>
        <taxon>Camelineae</taxon>
        <taxon>Arabidopsis</taxon>
    </lineage>
</organism>
<proteinExistence type="evidence at protein level"/>
<sequence length="172" mass="20123">MLSGKAAYDLFVYGSLQEPEVVYVLLNRVPDHVSAVLSGFHRFRLKGRVYPTILPDGTGKVNGKVLKGITDDELKMLDEFEDVEYDRKTVEVMLTDTSEKLQVETYVWKNKDDPDLYGEWDFEEWRQHDKEDFVTATKKFLENRRLPEAKTRMDTFKTFFKQDLENGKPLDS</sequence>